<sequence length="211" mass="22950">MYQPDFPTVPFRLGLYPVVDSVAWIERLLEVGVRTIQLRIKDKRNEEVEADVIAAIALGRRYDARLFINDYWRLAIKHRAYGVHLGQEDLETTDLKAIQAAGLRLGVSTHDDMEIDVALAAKPSYIALGHVFPTQTKQMPSAPQGLAQLASHIERLADYPTVAIGGISLERAPAVLATGVGSVAVVSAITQAADWREATAQLLAIVGVGDE</sequence>
<gene>
    <name evidence="1" type="primary">thiE</name>
    <name type="ordered locus">SCH_4044</name>
</gene>
<feature type="chain" id="PRO_1000008168" description="Thiamine-phosphate synthase">
    <location>
        <begin position="1"/>
        <end position="211"/>
    </location>
</feature>
<feature type="binding site" evidence="1">
    <location>
        <begin position="37"/>
        <end position="41"/>
    </location>
    <ligand>
        <name>4-amino-2-methyl-5-(diphosphooxymethyl)pyrimidine</name>
        <dbReference type="ChEBI" id="CHEBI:57841"/>
    </ligand>
</feature>
<feature type="binding site" evidence="1">
    <location>
        <position position="69"/>
    </location>
    <ligand>
        <name>4-amino-2-methyl-5-(diphosphooxymethyl)pyrimidine</name>
        <dbReference type="ChEBI" id="CHEBI:57841"/>
    </ligand>
</feature>
<feature type="binding site" evidence="1">
    <location>
        <position position="70"/>
    </location>
    <ligand>
        <name>Mg(2+)</name>
        <dbReference type="ChEBI" id="CHEBI:18420"/>
    </ligand>
</feature>
<feature type="binding site" evidence="1">
    <location>
        <position position="89"/>
    </location>
    <ligand>
        <name>Mg(2+)</name>
        <dbReference type="ChEBI" id="CHEBI:18420"/>
    </ligand>
</feature>
<feature type="binding site" evidence="1">
    <location>
        <position position="108"/>
    </location>
    <ligand>
        <name>4-amino-2-methyl-5-(diphosphooxymethyl)pyrimidine</name>
        <dbReference type="ChEBI" id="CHEBI:57841"/>
    </ligand>
</feature>
<feature type="binding site" evidence="1">
    <location>
        <begin position="134"/>
        <end position="136"/>
    </location>
    <ligand>
        <name>2-[(2R,5Z)-2-carboxy-4-methylthiazol-5(2H)-ylidene]ethyl phosphate</name>
        <dbReference type="ChEBI" id="CHEBI:62899"/>
    </ligand>
</feature>
<feature type="binding site" evidence="1">
    <location>
        <position position="137"/>
    </location>
    <ligand>
        <name>4-amino-2-methyl-5-(diphosphooxymethyl)pyrimidine</name>
        <dbReference type="ChEBI" id="CHEBI:57841"/>
    </ligand>
</feature>
<feature type="binding site" evidence="1">
    <location>
        <position position="166"/>
    </location>
    <ligand>
        <name>2-[(2R,5Z)-2-carboxy-4-methylthiazol-5(2H)-ylidene]ethyl phosphate</name>
        <dbReference type="ChEBI" id="CHEBI:62899"/>
    </ligand>
</feature>
<feature type="binding site" evidence="1">
    <location>
        <begin position="186"/>
        <end position="187"/>
    </location>
    <ligand>
        <name>2-[(2R,5Z)-2-carboxy-4-methylthiazol-5(2H)-ylidene]ethyl phosphate</name>
        <dbReference type="ChEBI" id="CHEBI:62899"/>
    </ligand>
</feature>
<protein>
    <recommendedName>
        <fullName evidence="1">Thiamine-phosphate synthase</fullName>
        <shortName evidence="1">TP synthase</shortName>
        <shortName evidence="1">TPS</shortName>
        <ecNumber evidence="1">2.5.1.3</ecNumber>
    </recommendedName>
    <alternativeName>
        <fullName evidence="1">Thiamine-phosphate pyrophosphorylase</fullName>
        <shortName evidence="1">TMP pyrophosphorylase</shortName>
        <shortName evidence="1">TMP-PPase</shortName>
    </alternativeName>
</protein>
<evidence type="ECO:0000255" key="1">
    <source>
        <dbReference type="HAMAP-Rule" id="MF_00097"/>
    </source>
</evidence>
<name>THIE_SALCH</name>
<accession>Q57H62</accession>
<organism>
    <name type="scientific">Salmonella choleraesuis (strain SC-B67)</name>
    <dbReference type="NCBI Taxonomy" id="321314"/>
    <lineage>
        <taxon>Bacteria</taxon>
        <taxon>Pseudomonadati</taxon>
        <taxon>Pseudomonadota</taxon>
        <taxon>Gammaproteobacteria</taxon>
        <taxon>Enterobacterales</taxon>
        <taxon>Enterobacteriaceae</taxon>
        <taxon>Salmonella</taxon>
    </lineage>
</organism>
<comment type="function">
    <text evidence="1">Condenses 4-methyl-5-(beta-hydroxyethyl)thiazole monophosphate (THZ-P) and 2-methyl-4-amino-5-hydroxymethyl pyrimidine pyrophosphate (HMP-PP) to form thiamine monophosphate (TMP).</text>
</comment>
<comment type="catalytic activity">
    <reaction evidence="1">
        <text>2-[(2R,5Z)-2-carboxy-4-methylthiazol-5(2H)-ylidene]ethyl phosphate + 4-amino-2-methyl-5-(diphosphooxymethyl)pyrimidine + 2 H(+) = thiamine phosphate + CO2 + diphosphate</text>
        <dbReference type="Rhea" id="RHEA:47844"/>
        <dbReference type="ChEBI" id="CHEBI:15378"/>
        <dbReference type="ChEBI" id="CHEBI:16526"/>
        <dbReference type="ChEBI" id="CHEBI:33019"/>
        <dbReference type="ChEBI" id="CHEBI:37575"/>
        <dbReference type="ChEBI" id="CHEBI:57841"/>
        <dbReference type="ChEBI" id="CHEBI:62899"/>
        <dbReference type="EC" id="2.5.1.3"/>
    </reaction>
</comment>
<comment type="catalytic activity">
    <reaction evidence="1">
        <text>2-(2-carboxy-4-methylthiazol-5-yl)ethyl phosphate + 4-amino-2-methyl-5-(diphosphooxymethyl)pyrimidine + 2 H(+) = thiamine phosphate + CO2 + diphosphate</text>
        <dbReference type="Rhea" id="RHEA:47848"/>
        <dbReference type="ChEBI" id="CHEBI:15378"/>
        <dbReference type="ChEBI" id="CHEBI:16526"/>
        <dbReference type="ChEBI" id="CHEBI:33019"/>
        <dbReference type="ChEBI" id="CHEBI:37575"/>
        <dbReference type="ChEBI" id="CHEBI:57841"/>
        <dbReference type="ChEBI" id="CHEBI:62890"/>
        <dbReference type="EC" id="2.5.1.3"/>
    </reaction>
</comment>
<comment type="catalytic activity">
    <reaction evidence="1">
        <text>4-methyl-5-(2-phosphooxyethyl)-thiazole + 4-amino-2-methyl-5-(diphosphooxymethyl)pyrimidine + H(+) = thiamine phosphate + diphosphate</text>
        <dbReference type="Rhea" id="RHEA:22328"/>
        <dbReference type="ChEBI" id="CHEBI:15378"/>
        <dbReference type="ChEBI" id="CHEBI:33019"/>
        <dbReference type="ChEBI" id="CHEBI:37575"/>
        <dbReference type="ChEBI" id="CHEBI:57841"/>
        <dbReference type="ChEBI" id="CHEBI:58296"/>
        <dbReference type="EC" id="2.5.1.3"/>
    </reaction>
</comment>
<comment type="cofactor">
    <cofactor evidence="1">
        <name>Mg(2+)</name>
        <dbReference type="ChEBI" id="CHEBI:18420"/>
    </cofactor>
    <text evidence="1">Binds 1 Mg(2+) ion per subunit.</text>
</comment>
<comment type="pathway">
    <text evidence="1">Cofactor biosynthesis; thiamine diphosphate biosynthesis; thiamine phosphate from 4-amino-2-methyl-5-diphosphomethylpyrimidine and 4-methyl-5-(2-phosphoethyl)-thiazole: step 1/1.</text>
</comment>
<comment type="similarity">
    <text evidence="1">Belongs to the thiamine-phosphate synthase family.</text>
</comment>
<keyword id="KW-0460">Magnesium</keyword>
<keyword id="KW-0479">Metal-binding</keyword>
<keyword id="KW-0784">Thiamine biosynthesis</keyword>
<keyword id="KW-0808">Transferase</keyword>
<reference key="1">
    <citation type="journal article" date="2005" name="Nucleic Acids Res.">
        <title>The genome sequence of Salmonella enterica serovar Choleraesuis, a highly invasive and resistant zoonotic pathogen.</title>
        <authorList>
            <person name="Chiu C.-H."/>
            <person name="Tang P."/>
            <person name="Chu C."/>
            <person name="Hu S."/>
            <person name="Bao Q."/>
            <person name="Yu J."/>
            <person name="Chou Y.-Y."/>
            <person name="Wang H.-S."/>
            <person name="Lee Y.-S."/>
        </authorList>
    </citation>
    <scope>NUCLEOTIDE SEQUENCE [LARGE SCALE GENOMIC DNA]</scope>
    <source>
        <strain>SC-B67</strain>
    </source>
</reference>
<dbReference type="EC" id="2.5.1.3" evidence="1"/>
<dbReference type="EMBL" id="AE017220">
    <property type="protein sequence ID" value="AAX67950.1"/>
    <property type="molecule type" value="Genomic_DNA"/>
</dbReference>
<dbReference type="RefSeq" id="WP_000284645.1">
    <property type="nucleotide sequence ID" value="NC_006905.1"/>
</dbReference>
<dbReference type="SMR" id="Q57H62"/>
<dbReference type="KEGG" id="sec:SCH_4044"/>
<dbReference type="HOGENOM" id="CLU_018272_3_3_6"/>
<dbReference type="UniPathway" id="UPA00060">
    <property type="reaction ID" value="UER00141"/>
</dbReference>
<dbReference type="Proteomes" id="UP000000538">
    <property type="component" value="Chromosome"/>
</dbReference>
<dbReference type="GO" id="GO:0005737">
    <property type="term" value="C:cytoplasm"/>
    <property type="evidence" value="ECO:0007669"/>
    <property type="project" value="TreeGrafter"/>
</dbReference>
<dbReference type="GO" id="GO:0000287">
    <property type="term" value="F:magnesium ion binding"/>
    <property type="evidence" value="ECO:0007669"/>
    <property type="project" value="UniProtKB-UniRule"/>
</dbReference>
<dbReference type="GO" id="GO:0004789">
    <property type="term" value="F:thiamine-phosphate diphosphorylase activity"/>
    <property type="evidence" value="ECO:0007669"/>
    <property type="project" value="UniProtKB-UniRule"/>
</dbReference>
<dbReference type="GO" id="GO:0009228">
    <property type="term" value="P:thiamine biosynthetic process"/>
    <property type="evidence" value="ECO:0007669"/>
    <property type="project" value="UniProtKB-KW"/>
</dbReference>
<dbReference type="GO" id="GO:0009229">
    <property type="term" value="P:thiamine diphosphate biosynthetic process"/>
    <property type="evidence" value="ECO:0007669"/>
    <property type="project" value="UniProtKB-UniRule"/>
</dbReference>
<dbReference type="CDD" id="cd00564">
    <property type="entry name" value="TMP_TenI"/>
    <property type="match status" value="1"/>
</dbReference>
<dbReference type="FunFam" id="3.20.20.70:FF:000064">
    <property type="entry name" value="Thiamine-phosphate synthase"/>
    <property type="match status" value="1"/>
</dbReference>
<dbReference type="Gene3D" id="3.20.20.70">
    <property type="entry name" value="Aldolase class I"/>
    <property type="match status" value="1"/>
</dbReference>
<dbReference type="HAMAP" id="MF_00097">
    <property type="entry name" value="TMP_synthase"/>
    <property type="match status" value="1"/>
</dbReference>
<dbReference type="InterPro" id="IPR013785">
    <property type="entry name" value="Aldolase_TIM"/>
</dbReference>
<dbReference type="InterPro" id="IPR036206">
    <property type="entry name" value="ThiamineP_synth_sf"/>
</dbReference>
<dbReference type="InterPro" id="IPR022998">
    <property type="entry name" value="ThiamineP_synth_TenI"/>
</dbReference>
<dbReference type="InterPro" id="IPR034291">
    <property type="entry name" value="TMP_synthase"/>
</dbReference>
<dbReference type="NCBIfam" id="NF002904">
    <property type="entry name" value="PRK03512.1"/>
    <property type="match status" value="1"/>
</dbReference>
<dbReference type="NCBIfam" id="TIGR00693">
    <property type="entry name" value="thiE"/>
    <property type="match status" value="1"/>
</dbReference>
<dbReference type="PANTHER" id="PTHR20857">
    <property type="entry name" value="THIAMINE-PHOSPHATE PYROPHOSPHORYLASE"/>
    <property type="match status" value="1"/>
</dbReference>
<dbReference type="PANTHER" id="PTHR20857:SF15">
    <property type="entry name" value="THIAMINE-PHOSPHATE SYNTHASE"/>
    <property type="match status" value="1"/>
</dbReference>
<dbReference type="Pfam" id="PF02581">
    <property type="entry name" value="TMP-TENI"/>
    <property type="match status" value="1"/>
</dbReference>
<dbReference type="SUPFAM" id="SSF51391">
    <property type="entry name" value="Thiamin phosphate synthase"/>
    <property type="match status" value="1"/>
</dbReference>
<proteinExistence type="inferred from homology"/>